<protein>
    <recommendedName>
        <fullName>Low molecular mass early light-inducible protein HV90, chloroplastic</fullName>
        <shortName>ELIP</shortName>
    </recommendedName>
</protein>
<evidence type="ECO:0000255" key="1"/>
<evidence type="ECO:0000305" key="2"/>
<dbReference type="EMBL" id="X15692">
    <property type="protein sequence ID" value="CAA33727.1"/>
    <property type="molecule type" value="mRNA"/>
</dbReference>
<dbReference type="PIR" id="S07474">
    <property type="entry name" value="S07474"/>
</dbReference>
<dbReference type="ExpressionAtlas" id="P14897">
    <property type="expression patterns" value="baseline and differential"/>
</dbReference>
<dbReference type="GO" id="GO:0031969">
    <property type="term" value="C:chloroplast membrane"/>
    <property type="evidence" value="ECO:0007669"/>
    <property type="project" value="UniProtKB-SubCell"/>
</dbReference>
<dbReference type="Gene3D" id="1.10.3460.10">
    <property type="entry name" value="Chlorophyll a/b binding protein domain"/>
    <property type="match status" value="1"/>
</dbReference>
<dbReference type="InterPro" id="IPR022796">
    <property type="entry name" value="Chloroa_b-bind"/>
</dbReference>
<dbReference type="PANTHER" id="PTHR14154">
    <property type="entry name" value="UPF0041 BRAIN PROTEIN 44-RELATED"/>
    <property type="match status" value="1"/>
</dbReference>
<dbReference type="Pfam" id="PF00504">
    <property type="entry name" value="Chloroa_b-bind"/>
    <property type="match status" value="1"/>
</dbReference>
<dbReference type="SUPFAM" id="SSF103511">
    <property type="entry name" value="Chlorophyll a-b binding protein"/>
    <property type="match status" value="1"/>
</dbReference>
<comment type="function">
    <text>Probably involved in the integration of pigments into the mature pigment-protein complexes.</text>
</comment>
<comment type="subcellular location">
    <subcellularLocation>
        <location evidence="2">Plastid</location>
        <location evidence="2">Chloroplast membrane</location>
        <topology evidence="2">Multi-pass membrane protein</topology>
    </subcellularLocation>
    <text>Associated with both photosystems I and II.</text>
</comment>
<comment type="developmental stage">
    <text>Appears transiently during greening of etiolated seedlings and disappears before chloroplast development is completed.</text>
</comment>
<comment type="induction">
    <text>By light.</text>
</comment>
<comment type="similarity">
    <text evidence="2">Belongs to the ELIP/psbS family.</text>
</comment>
<proteinExistence type="evidence at transcript level"/>
<accession>P14897</accession>
<feature type="transit peptide" description="Chloroplast">
    <location>
        <begin position="1"/>
        <end position="38"/>
    </location>
</feature>
<feature type="chain" id="PRO_0000007803" description="Low molecular mass early light-inducible protein HV90, chloroplastic">
    <location>
        <begin position="39"/>
        <end position="172"/>
    </location>
</feature>
<feature type="transmembrane region" description="Helical" evidence="1">
    <location>
        <begin position="106"/>
        <end position="126"/>
    </location>
</feature>
<feature type="transmembrane region" description="Helical" evidence="1">
    <location>
        <begin position="150"/>
        <end position="170"/>
    </location>
</feature>
<keyword id="KW-0150">Chloroplast</keyword>
<keyword id="KW-0472">Membrane</keyword>
<keyword id="KW-0934">Plastid</keyword>
<keyword id="KW-0809">Transit peptide</keyword>
<keyword id="KW-0812">Transmembrane</keyword>
<keyword id="KW-1133">Transmembrane helix</keyword>
<name>ELI9_HORVU</name>
<reference key="1">
    <citation type="journal article" date="1989" name="Plant Mol. Biol.">
        <title>Transiently expressed early light-inducible thylakoid proteins share transmembrane domains with light-harvesting chlorophyll binding proteins.</title>
        <authorList>
            <person name="Grimm B."/>
            <person name="Kruse E."/>
            <person name="Kloppstech K."/>
        </authorList>
    </citation>
    <scope>NUCLEOTIDE SEQUENCE [MRNA]</scope>
    <source>
        <strain>cv. Aramir</strain>
        <tissue>Leaf</tissue>
    </source>
</reference>
<sequence length="172" mass="17553">MATMMSMSSFAGAAVVPRSSASSFGARSLPALGRRALVVRAQTEGPSAPPPNKPKASTSIWDEMAFSGPAPERINGRLAMVGFVTALAVEAGRGDGLLSQLGSGTGQAWFAYTVAVLSMASLVPLLQGESAEGRAGAIMNANAELWNGRFAMLGLVALAATEIITGAPFINV</sequence>
<organism>
    <name type="scientific">Hordeum vulgare</name>
    <name type="common">Barley</name>
    <dbReference type="NCBI Taxonomy" id="4513"/>
    <lineage>
        <taxon>Eukaryota</taxon>
        <taxon>Viridiplantae</taxon>
        <taxon>Streptophyta</taxon>
        <taxon>Embryophyta</taxon>
        <taxon>Tracheophyta</taxon>
        <taxon>Spermatophyta</taxon>
        <taxon>Magnoliopsida</taxon>
        <taxon>Liliopsida</taxon>
        <taxon>Poales</taxon>
        <taxon>Poaceae</taxon>
        <taxon>BOP clade</taxon>
        <taxon>Pooideae</taxon>
        <taxon>Triticodae</taxon>
        <taxon>Triticeae</taxon>
        <taxon>Hordeinae</taxon>
        <taxon>Hordeum</taxon>
    </lineage>
</organism>